<protein>
    <recommendedName>
        <fullName>B-cell CLL/lymphoma 9 protein</fullName>
        <shortName>B-cell lymphoma 9 protein</shortName>
        <shortName>Bcl-9</shortName>
    </recommendedName>
    <alternativeName>
        <fullName>Protein legless homolog</fullName>
    </alternativeName>
</protein>
<proteinExistence type="evidence at protein level"/>
<sequence>MHSSNPKVRSSPSGNTQSSPKSKQEVMVRPPTVMSPSGNPQLDSKFSNQGKQGGSASQSQPSPCDSKSGGHTPKALPGPGGSMGLKNGAGNGAKGKGKRERSISADSFDQRDPGTPNDDSDIKECNSADHIKSQDSQHTPHSMTPSNATAPRSSTPSHGQTTATEPTPAQKTPAKVVYVFSTEMANKAAEAVLKGQVETIVSFHIQNISNNKTERSTAPLNTQISALRNDPKPLPQQPPAPANQDQNSSQNTRLQPTPPIPAPAPKPAAPPRPLDRESPGVENKLIPSVGSPASSTPLPPDGTGPNSTPNNRAVTPVSQGSNSSSADPKAPPPPPVSSGEPPTLGENPDGLSQEQLEHRERSLQTLRDIQRMLFPDEKEFTGAQSGGPQQNPGVLDGPQKKPEGPIQAMMAQSQSLGKGPGPRTDVGAPFGPQGHRDVPFSPDEMVPPSMNSQSGTIGPDHLDHMTPEQIAWLKLQQEFYEEKRRKQEQVVVQQCSLQDMMVHQHGPRGVVRGPPPPYQMTPSEGWAPGGTEPFSDGINMPHSLPPRGMAPHPNMPGSQMRLPGFAGMINSEMEGPNVPNPASRPGLSGVSWPDDVPKIPDGRNFPPGQGIFSGPGRGERFPNPQGLSEEMFQQQLAEKQLGLPPGMAMEGIRPSMEMNRMIPGSQRHMEPGNNPIFPRIPVEGPLSPSRGDFPKGIPPQMGPGRELEFGMVPSGMKGDVNLNVNMGSNSQMIPQKMREAGAGPEEMLKLRPGGSDMLPAQQKMVPLPFGEHPQQEYGMGPRPFLPMSQGPGSNSGLRNLREPIGPDQRTNSRLSHMPPLPLNPSSNPTSLNTAPPVQRGLGRKPLDISVAGSQVHSPGINPLKSPTMHQVQSPMLGSPSGNLKSPQTPSQLAGMLAGPAAAASIKSPPVLGSAAASPVHLKSPSLPAPSPGWTSSPKPPLQSPGIPPNHKAPLTMASPAMLGNVESGGPPPPTASQPASVNIPGSLPSSTPYTMPPEPTLSQNPLSIMMSRMSKFAMPSSTPLYHDAIKTVASSDDDSPPARSPNLPSMNNMPGMGINTQNPRISGPNPVVPMPTLSPMGMTQPLSHSNQMPSPNAVGPNIPPHGVPMGPGLMSHNPIMGHGSQEPPMVPQGRMGFPQGFPPVQSPPQQVPFPHNGPSGGQGSFPGGMGFPGEGPLGRPSNLPQSSADAALCKPGGPGGPDSFTVLGNSMPSVFTDPDLQEVIRPGATGIPEFDLSRIIPSEKPSQTLQYFPRGEVPGRKQPQGPGPGFSHMQGMMGEQAPRMGLALPGMGGPGPVGTPDIPLGTAPSMPGHNPMRPPAFLQQGMMGPHHRMMSPAQSTMPGQPTLMSNPAAAVGMIPGKDRGPAGLYTHPGPVGSPGMMMSMQGMMGPQQNIMIPPQMRPRGMAADVGMGGFSQGPGNPGNMMF</sequence>
<keyword id="KW-0002">3D-structure</keyword>
<keyword id="KW-0007">Acetylation</keyword>
<keyword id="KW-0160">Chromosomal rearrangement</keyword>
<keyword id="KW-0488">Methylation</keyword>
<keyword id="KW-0539">Nucleus</keyword>
<keyword id="KW-0597">Phosphoprotein</keyword>
<keyword id="KW-1267">Proteomics identification</keyword>
<keyword id="KW-0656">Proto-oncogene</keyword>
<keyword id="KW-1185">Reference proteome</keyword>
<keyword id="KW-0879">Wnt signaling pathway</keyword>
<name>BCL9_HUMAN</name>
<accession>O00512</accession>
<accession>Q5T489</accession>
<dbReference type="EMBL" id="Y13620">
    <property type="protein sequence ID" value="CAA73942.1"/>
    <property type="status" value="ALT_FRAME"/>
    <property type="molecule type" value="mRNA"/>
</dbReference>
<dbReference type="EMBL" id="AL359207">
    <property type="protein sequence ID" value="CAI15198.1"/>
    <property type="molecule type" value="Genomic_DNA"/>
</dbReference>
<dbReference type="EMBL" id="CH471223">
    <property type="protein sequence ID" value="EAW50932.1"/>
    <property type="molecule type" value="Genomic_DNA"/>
</dbReference>
<dbReference type="CCDS" id="CCDS30833.1"/>
<dbReference type="RefSeq" id="NP_004317.2">
    <property type="nucleotide sequence ID" value="NM_004326.4"/>
</dbReference>
<dbReference type="RefSeq" id="XP_005273028.1">
    <property type="nucleotide sequence ID" value="XM_005272971.4"/>
</dbReference>
<dbReference type="PDB" id="2GL7">
    <property type="method" value="X-ray"/>
    <property type="resolution" value="2.60 A"/>
    <property type="chains" value="C/F=347-392"/>
</dbReference>
<dbReference type="PDB" id="2VP7">
    <property type="method" value="X-ray"/>
    <property type="resolution" value="1.65 A"/>
    <property type="chains" value="B=174-205"/>
</dbReference>
<dbReference type="PDB" id="2VPB">
    <property type="method" value="X-ray"/>
    <property type="resolution" value="1.59 A"/>
    <property type="chains" value="B=174-205"/>
</dbReference>
<dbReference type="PDB" id="2VPD">
    <property type="method" value="X-ray"/>
    <property type="resolution" value="2.77 A"/>
    <property type="chains" value="B/D=174-205"/>
</dbReference>
<dbReference type="PDB" id="2VPE">
    <property type="method" value="X-ray"/>
    <property type="resolution" value="1.70 A"/>
    <property type="chains" value="B/D=177-205"/>
</dbReference>
<dbReference type="PDB" id="2VPG">
    <property type="method" value="X-ray"/>
    <property type="resolution" value="1.60 A"/>
    <property type="chains" value="B/D=177-205"/>
</dbReference>
<dbReference type="PDB" id="3SL9">
    <property type="method" value="X-ray"/>
    <property type="resolution" value="2.20 A"/>
    <property type="chains" value="C/D/F/H=344-396"/>
</dbReference>
<dbReference type="PDB" id="8Y0P">
    <property type="method" value="X-ray"/>
    <property type="resolution" value="2.62 A"/>
    <property type="chains" value="L=351-374"/>
</dbReference>
<dbReference type="PDBsum" id="2GL7"/>
<dbReference type="PDBsum" id="2VP7"/>
<dbReference type="PDBsum" id="2VPB"/>
<dbReference type="PDBsum" id="2VPD"/>
<dbReference type="PDBsum" id="2VPE"/>
<dbReference type="PDBsum" id="2VPG"/>
<dbReference type="PDBsum" id="3SL9"/>
<dbReference type="PDBsum" id="8Y0P"/>
<dbReference type="SMR" id="O00512"/>
<dbReference type="BioGRID" id="107079">
    <property type="interactions" value="87"/>
</dbReference>
<dbReference type="CORUM" id="O00512"/>
<dbReference type="FunCoup" id="O00512">
    <property type="interactions" value="1203"/>
</dbReference>
<dbReference type="IntAct" id="O00512">
    <property type="interactions" value="55"/>
</dbReference>
<dbReference type="MINT" id="O00512"/>
<dbReference type="STRING" id="9606.ENSP00000234739"/>
<dbReference type="BindingDB" id="O00512"/>
<dbReference type="ChEMBL" id="CHEMBL3712821"/>
<dbReference type="GlyGen" id="O00512">
    <property type="glycosylation" value="7 sites, 1 O-linked glycan (2 sites)"/>
</dbReference>
<dbReference type="iPTMnet" id="O00512"/>
<dbReference type="PhosphoSitePlus" id="O00512"/>
<dbReference type="BioMuta" id="BCL9"/>
<dbReference type="jPOST" id="O00512"/>
<dbReference type="MassIVE" id="O00512"/>
<dbReference type="PaxDb" id="9606-ENSP00000234739"/>
<dbReference type="PeptideAtlas" id="O00512"/>
<dbReference type="ProteomicsDB" id="47950"/>
<dbReference type="Pumba" id="O00512"/>
<dbReference type="Antibodypedia" id="20242">
    <property type="antibodies" value="162 antibodies from 25 providers"/>
</dbReference>
<dbReference type="DNASU" id="607"/>
<dbReference type="Ensembl" id="ENST00000234739.8">
    <property type="protein sequence ID" value="ENSP00000234739.3"/>
    <property type="gene ID" value="ENSG00000116128.12"/>
</dbReference>
<dbReference type="GeneID" id="607"/>
<dbReference type="KEGG" id="hsa:607"/>
<dbReference type="MANE-Select" id="ENST00000234739.8">
    <property type="protein sequence ID" value="ENSP00000234739.3"/>
    <property type="RefSeq nucleotide sequence ID" value="NM_004326.4"/>
    <property type="RefSeq protein sequence ID" value="NP_004317.2"/>
</dbReference>
<dbReference type="UCSC" id="uc031uul.2">
    <property type="organism name" value="human"/>
</dbReference>
<dbReference type="AGR" id="HGNC:1008"/>
<dbReference type="CTD" id="607"/>
<dbReference type="DisGeNET" id="607"/>
<dbReference type="GeneCards" id="BCL9"/>
<dbReference type="HGNC" id="HGNC:1008">
    <property type="gene designation" value="BCL9"/>
</dbReference>
<dbReference type="HPA" id="ENSG00000116128">
    <property type="expression patterns" value="Low tissue specificity"/>
</dbReference>
<dbReference type="MIM" id="602597">
    <property type="type" value="gene"/>
</dbReference>
<dbReference type="neXtProt" id="NX_O00512"/>
<dbReference type="OpenTargets" id="ENSG00000116128"/>
<dbReference type="PharmGKB" id="PA25318"/>
<dbReference type="VEuPathDB" id="HostDB:ENSG00000116128"/>
<dbReference type="eggNOG" id="ENOG502QREN">
    <property type="taxonomic scope" value="Eukaryota"/>
</dbReference>
<dbReference type="GeneTree" id="ENSGT00730000110915"/>
<dbReference type="HOGENOM" id="CLU_004930_1_0_1"/>
<dbReference type="InParanoid" id="O00512"/>
<dbReference type="OMA" id="ECNSTEH"/>
<dbReference type="OrthoDB" id="7668649at2759"/>
<dbReference type="PAN-GO" id="O00512">
    <property type="GO annotations" value="4 GO annotations based on evolutionary models"/>
</dbReference>
<dbReference type="PhylomeDB" id="O00512"/>
<dbReference type="TreeFam" id="TF331144"/>
<dbReference type="PathwayCommons" id="O00512"/>
<dbReference type="Reactome" id="R-HSA-201722">
    <property type="pathway name" value="Formation of the beta-catenin:TCF transactivating complex"/>
</dbReference>
<dbReference type="Reactome" id="R-HSA-3769402">
    <property type="pathway name" value="Deactivation of the beta-catenin transactivating complex"/>
</dbReference>
<dbReference type="SignaLink" id="O00512"/>
<dbReference type="SIGNOR" id="O00512"/>
<dbReference type="BioGRID-ORCS" id="607">
    <property type="hits" value="60 hits in 1156 CRISPR screens"/>
</dbReference>
<dbReference type="ChiTaRS" id="BCL9">
    <property type="organism name" value="human"/>
</dbReference>
<dbReference type="EvolutionaryTrace" id="O00512"/>
<dbReference type="GeneWiki" id="BCL9"/>
<dbReference type="GenomeRNAi" id="607"/>
<dbReference type="Pharos" id="O00512">
    <property type="development level" value="Tbio"/>
</dbReference>
<dbReference type="PRO" id="PR:O00512"/>
<dbReference type="Proteomes" id="UP000005640">
    <property type="component" value="Chromosome 1"/>
</dbReference>
<dbReference type="RNAct" id="O00512">
    <property type="molecule type" value="protein"/>
</dbReference>
<dbReference type="Bgee" id="ENSG00000116128">
    <property type="expression patterns" value="Expressed in cortical plate and 138 other cell types or tissues"/>
</dbReference>
<dbReference type="ExpressionAtlas" id="O00512">
    <property type="expression patterns" value="baseline and differential"/>
</dbReference>
<dbReference type="GO" id="GO:1990907">
    <property type="term" value="C:beta-catenin-TCF complex"/>
    <property type="evidence" value="ECO:0000314"/>
    <property type="project" value="FlyBase"/>
</dbReference>
<dbReference type="GO" id="GO:0005801">
    <property type="term" value="C:cis-Golgi network"/>
    <property type="evidence" value="ECO:0000314"/>
    <property type="project" value="MGI"/>
</dbReference>
<dbReference type="GO" id="GO:0005654">
    <property type="term" value="C:nucleoplasm"/>
    <property type="evidence" value="ECO:0000304"/>
    <property type="project" value="Reactome"/>
</dbReference>
<dbReference type="GO" id="GO:0016528">
    <property type="term" value="C:sarcoplasm"/>
    <property type="evidence" value="ECO:0007669"/>
    <property type="project" value="Ensembl"/>
</dbReference>
<dbReference type="GO" id="GO:0008013">
    <property type="term" value="F:beta-catenin binding"/>
    <property type="evidence" value="ECO:0000318"/>
    <property type="project" value="GO_Central"/>
</dbReference>
<dbReference type="GO" id="GO:0003713">
    <property type="term" value="F:transcription coactivator activity"/>
    <property type="evidence" value="ECO:0007669"/>
    <property type="project" value="InterPro"/>
</dbReference>
<dbReference type="GO" id="GO:0060070">
    <property type="term" value="P:canonical Wnt signaling pathway"/>
    <property type="evidence" value="ECO:0000318"/>
    <property type="project" value="GO_Central"/>
</dbReference>
<dbReference type="GO" id="GO:0045445">
    <property type="term" value="P:myoblast differentiation"/>
    <property type="evidence" value="ECO:0007669"/>
    <property type="project" value="Ensembl"/>
</dbReference>
<dbReference type="GO" id="GO:0014908">
    <property type="term" value="P:myotube differentiation involved in skeletal muscle regeneration"/>
    <property type="evidence" value="ECO:0007669"/>
    <property type="project" value="Ensembl"/>
</dbReference>
<dbReference type="GO" id="GO:0045944">
    <property type="term" value="P:positive regulation of transcription by RNA polymerase II"/>
    <property type="evidence" value="ECO:0000318"/>
    <property type="project" value="GO_Central"/>
</dbReference>
<dbReference type="GO" id="GO:0035914">
    <property type="term" value="P:skeletal muscle cell differentiation"/>
    <property type="evidence" value="ECO:0007669"/>
    <property type="project" value="Ensembl"/>
</dbReference>
<dbReference type="GO" id="GO:0035019">
    <property type="term" value="P:somatic stem cell population maintenance"/>
    <property type="evidence" value="ECO:0007669"/>
    <property type="project" value="Ensembl"/>
</dbReference>
<dbReference type="GO" id="GO:0006366">
    <property type="term" value="P:transcription by RNA polymerase II"/>
    <property type="evidence" value="ECO:0007669"/>
    <property type="project" value="Ensembl"/>
</dbReference>
<dbReference type="FunFam" id="3.30.40.10:FF:000190">
    <property type="entry name" value="B-cell CLL/lymphoma 9, isoform CRA_a"/>
    <property type="match status" value="1"/>
</dbReference>
<dbReference type="Gene3D" id="3.30.40.10">
    <property type="entry name" value="Zinc/RING finger domain, C3HC4 (zinc finger)"/>
    <property type="match status" value="1"/>
</dbReference>
<dbReference type="IDEAL" id="IID00002"/>
<dbReference type="InterPro" id="IPR015668">
    <property type="entry name" value="Bcl-9/Bcl-9l"/>
</dbReference>
<dbReference type="InterPro" id="IPR024670">
    <property type="entry name" value="BCL9_beta-catenin-bd_dom"/>
</dbReference>
<dbReference type="InterPro" id="IPR013083">
    <property type="entry name" value="Znf_RING/FYVE/PHD"/>
</dbReference>
<dbReference type="PANTHER" id="PTHR15185:SF5">
    <property type="entry name" value="B-CELL CLL_LYMPHOMA 9 PROTEIN"/>
    <property type="match status" value="1"/>
</dbReference>
<dbReference type="PANTHER" id="PTHR15185">
    <property type="entry name" value="BCL9"/>
    <property type="match status" value="1"/>
</dbReference>
<dbReference type="Pfam" id="PF11502">
    <property type="entry name" value="BCL9"/>
    <property type="match status" value="1"/>
</dbReference>
<evidence type="ECO:0000250" key="1"/>
<evidence type="ECO:0000250" key="2">
    <source>
        <dbReference type="UniProtKB" id="Q9D219"/>
    </source>
</evidence>
<evidence type="ECO:0000256" key="3">
    <source>
        <dbReference type="SAM" id="MobiDB-lite"/>
    </source>
</evidence>
<evidence type="ECO:0000269" key="4">
    <source>
    </source>
</evidence>
<evidence type="ECO:0000269" key="5">
    <source>
    </source>
</evidence>
<evidence type="ECO:0000269" key="6">
    <source>
    </source>
</evidence>
<evidence type="ECO:0000269" key="7">
    <source>
    </source>
</evidence>
<evidence type="ECO:0000305" key="8"/>
<evidence type="ECO:0007744" key="9">
    <source>
    </source>
</evidence>
<evidence type="ECO:0007744" key="10">
    <source>
    </source>
</evidence>
<evidence type="ECO:0007744" key="11">
    <source>
    </source>
</evidence>
<evidence type="ECO:0007744" key="12">
    <source>
    </source>
</evidence>
<evidence type="ECO:0007744" key="13">
    <source>
    </source>
</evidence>
<evidence type="ECO:0007744" key="14">
    <source>
    </source>
</evidence>
<evidence type="ECO:0007829" key="15">
    <source>
        <dbReference type="PDB" id="2VPB"/>
    </source>
</evidence>
<evidence type="ECO:0007829" key="16">
    <source>
        <dbReference type="PDB" id="2VPD"/>
    </source>
</evidence>
<evidence type="ECO:0007829" key="17">
    <source>
        <dbReference type="PDB" id="3SL9"/>
    </source>
</evidence>
<feature type="chain" id="PRO_0000064885" description="B-cell CLL/lymphoma 9 protein">
    <location>
        <begin position="1"/>
        <end position="1426"/>
    </location>
</feature>
<feature type="region of interest" description="Disordered" evidence="3">
    <location>
        <begin position="1"/>
        <end position="173"/>
    </location>
</feature>
<feature type="region of interest" description="Interaction with PYGO1">
    <location>
        <begin position="177"/>
        <end position="205"/>
    </location>
</feature>
<feature type="region of interest" description="Disordered" evidence="3">
    <location>
        <begin position="207"/>
        <end position="439"/>
    </location>
</feature>
<feature type="region of interest" description="Interaction with CTNNB1" evidence="5">
    <location>
        <begin position="358"/>
        <end position="374"/>
    </location>
</feature>
<feature type="region of interest" description="Disordered" evidence="3">
    <location>
        <begin position="597"/>
        <end position="625"/>
    </location>
</feature>
<feature type="region of interest" description="Disordered" evidence="3">
    <location>
        <begin position="787"/>
        <end position="895"/>
    </location>
</feature>
<feature type="region of interest" description="Disordered" evidence="3">
    <location>
        <begin position="910"/>
        <end position="1002"/>
    </location>
</feature>
<feature type="region of interest" description="Disordered" evidence="3">
    <location>
        <begin position="1032"/>
        <end position="1052"/>
    </location>
</feature>
<feature type="region of interest" description="Disordered" evidence="3">
    <location>
        <begin position="1152"/>
        <end position="1203"/>
    </location>
</feature>
<feature type="region of interest" description="Disordered" evidence="3">
    <location>
        <begin position="1253"/>
        <end position="1275"/>
    </location>
</feature>
<feature type="compositionally biased region" description="Polar residues" evidence="3">
    <location>
        <begin position="1"/>
        <end position="21"/>
    </location>
</feature>
<feature type="compositionally biased region" description="Polar residues" evidence="3">
    <location>
        <begin position="34"/>
        <end position="46"/>
    </location>
</feature>
<feature type="compositionally biased region" description="Low complexity" evidence="3">
    <location>
        <begin position="47"/>
        <end position="62"/>
    </location>
</feature>
<feature type="compositionally biased region" description="Gly residues" evidence="3">
    <location>
        <begin position="78"/>
        <end position="94"/>
    </location>
</feature>
<feature type="compositionally biased region" description="Basic and acidic residues" evidence="3">
    <location>
        <begin position="100"/>
        <end position="112"/>
    </location>
</feature>
<feature type="compositionally biased region" description="Basic and acidic residues" evidence="3">
    <location>
        <begin position="120"/>
        <end position="135"/>
    </location>
</feature>
<feature type="compositionally biased region" description="Polar residues" evidence="3">
    <location>
        <begin position="136"/>
        <end position="170"/>
    </location>
</feature>
<feature type="compositionally biased region" description="Polar residues" evidence="3">
    <location>
        <begin position="207"/>
        <end position="226"/>
    </location>
</feature>
<feature type="compositionally biased region" description="Pro residues" evidence="3">
    <location>
        <begin position="232"/>
        <end position="241"/>
    </location>
</feature>
<feature type="compositionally biased region" description="Pro residues" evidence="3">
    <location>
        <begin position="256"/>
        <end position="272"/>
    </location>
</feature>
<feature type="compositionally biased region" description="Polar residues" evidence="3">
    <location>
        <begin position="304"/>
        <end position="320"/>
    </location>
</feature>
<feature type="compositionally biased region" description="Basic and acidic residues" evidence="3">
    <location>
        <begin position="355"/>
        <end position="380"/>
    </location>
</feature>
<feature type="compositionally biased region" description="Polar residues" evidence="3">
    <location>
        <begin position="382"/>
        <end position="392"/>
    </location>
</feature>
<feature type="compositionally biased region" description="Low complexity" evidence="3">
    <location>
        <begin position="823"/>
        <end position="836"/>
    </location>
</feature>
<feature type="compositionally biased region" description="Polar residues" evidence="3">
    <location>
        <begin position="867"/>
        <end position="891"/>
    </location>
</feature>
<feature type="compositionally biased region" description="Pro residues" evidence="3">
    <location>
        <begin position="937"/>
        <end position="947"/>
    </location>
</feature>
<feature type="compositionally biased region" description="Gly residues" evidence="3">
    <location>
        <begin position="1158"/>
        <end position="1176"/>
    </location>
</feature>
<feature type="modified residue" description="Phosphoserine" evidence="13">
    <location>
        <position position="104"/>
    </location>
</feature>
<feature type="modified residue" description="Phosphoserine" evidence="13">
    <location>
        <position position="157"/>
    </location>
</feature>
<feature type="modified residue" description="Phosphothreonine" evidence="10">
    <location>
        <position position="172"/>
    </location>
</feature>
<feature type="modified residue" description="Phosphothreonine" evidence="11 13 14">
    <location>
        <position position="315"/>
    </location>
</feature>
<feature type="modified residue" description="Phosphoserine" evidence="9">
    <location>
        <position position="318"/>
    </location>
</feature>
<feature type="modified residue" description="Phosphoserine" evidence="2">
    <location>
        <position position="352"/>
    </location>
</feature>
<feature type="modified residue" description="Phosphoserine" evidence="13">
    <location>
        <position position="687"/>
    </location>
</feature>
<feature type="modified residue" description="Phosphoserine" evidence="13">
    <location>
        <position position="689"/>
    </location>
</feature>
<feature type="modified residue" description="Asymmetric dimethylarginine" evidence="2">
    <location>
        <position position="801"/>
    </location>
</feature>
<feature type="modified residue" description="N6-acetyllysine" evidence="2">
    <location>
        <position position="844"/>
    </location>
</feature>
<feature type="modified residue" description="Phosphoserine" evidence="12">
    <location>
        <position position="907"/>
    </location>
</feature>
<feature type="modified residue" description="Phosphoserine" evidence="12 13">
    <location>
        <position position="917"/>
    </location>
</feature>
<feature type="sequence variant" id="VAR_046545" description="In dbSNP:rs3820129.">
    <original>P</original>
    <variation>S</variation>
    <location>
        <position position="671"/>
    </location>
</feature>
<feature type="sequence variant" id="VAR_046546" description="In dbSNP:rs34002844.">
    <original>R</original>
    <variation>K</variation>
    <location>
        <position position="782"/>
    </location>
</feature>
<feature type="mutagenesis site" description="Abolishes interaction with CTNNB1." evidence="5">
    <original>H</original>
    <variation>A</variation>
    <location>
        <position position="358"/>
    </location>
</feature>
<feature type="mutagenesis site" description="Abolishes interaction with CTNNB1." evidence="5">
    <original>R</original>
    <variation>A</variation>
    <location>
        <position position="359"/>
    </location>
</feature>
<feature type="mutagenesis site" description="Abolishes interaction with CTNNB1; when associated with A-369." evidence="5">
    <original>L</original>
    <variation>A</variation>
    <location>
        <position position="366"/>
    </location>
</feature>
<feature type="mutagenesis site" description="Abolishes interaction with CTNNB1; when associated with A-366." evidence="5">
    <original>I</original>
    <variation>A</variation>
    <location>
        <position position="369"/>
    </location>
</feature>
<feature type="sequence conflict" description="In Ref. 1; CAA73942." evidence="8" ref="1">
    <original>A</original>
    <variation>V</variation>
    <location>
        <position position="240"/>
    </location>
</feature>
<feature type="sequence conflict" description="In Ref. 1; CAA73942." evidence="8" ref="1">
    <original>Q</original>
    <variation>P</variation>
    <location>
        <position position="487"/>
    </location>
</feature>
<feature type="sequence conflict" description="In Ref. 1; CAA73942." evidence="8" ref="1">
    <original>Q</original>
    <variation>R</variation>
    <location>
        <position position="609"/>
    </location>
</feature>
<feature type="strand" evidence="15">
    <location>
        <begin position="178"/>
        <end position="180"/>
    </location>
</feature>
<feature type="helix" evidence="15">
    <location>
        <begin position="182"/>
        <end position="193"/>
    </location>
</feature>
<feature type="strand" evidence="16">
    <location>
        <begin position="196"/>
        <end position="199"/>
    </location>
</feature>
<feature type="helix" evidence="17">
    <location>
        <begin position="353"/>
        <end position="373"/>
    </location>
</feature>
<comment type="function">
    <text evidence="1 4">Involved in signal transduction through the Wnt pathway. Promotes beta-catenin's transcriptional activity (By similarity).</text>
</comment>
<comment type="subunit">
    <text evidence="5 6">Binds to beta-catenin (CTNNB1), PYGO1 and PYGO2; the interaction with PYGO1 increases PYGO1 affinity to histone H3 methylated at 'Lys 4'.</text>
</comment>
<comment type="interaction">
    <interactant intactId="EBI-533127">
        <id>O00512</id>
    </interactant>
    <interactant intactId="EBI-930143">
        <id>Q6P1J9</id>
        <label>CDC73</label>
    </interactant>
    <organismsDiffer>false</organismsDiffer>
    <experiments>2</experiments>
</comment>
<comment type="interaction">
    <interactant intactId="EBI-533127">
        <id>O00512</id>
    </interactant>
    <interactant intactId="EBI-491549">
        <id>P35222</id>
        <label>CTNNB1</label>
    </interactant>
    <organismsDiffer>false</organismsDiffer>
    <experiments>5</experiments>
</comment>
<comment type="interaction">
    <interactant intactId="EBI-533127">
        <id>O00512</id>
    </interactant>
    <interactant intactId="EBI-3397474">
        <id>Q9Y3Y4</id>
        <label>PYGO1</label>
    </interactant>
    <organismsDiffer>false</organismsDiffer>
    <experiments>8</experiments>
</comment>
<comment type="interaction">
    <interactant intactId="EBI-533127">
        <id>O00512</id>
    </interactant>
    <interactant intactId="EBI-932471">
        <id>Q9BRQ0</id>
        <label>PYGO2</label>
    </interactant>
    <organismsDiffer>false</organismsDiffer>
    <experiments>3</experiments>
</comment>
<comment type="interaction">
    <interactant intactId="EBI-533127">
        <id>O00512</id>
    </interactant>
    <interactant intactId="EBI-216128">
        <id>P18824</id>
        <label>arm</label>
    </interactant>
    <organismsDiffer>true</organismsDiffer>
    <experiments>3</experiments>
</comment>
<comment type="interaction">
    <interactant intactId="EBI-533127">
        <id>O00512</id>
    </interactant>
    <interactant intactId="EBI-152653">
        <id>Q9V9W8</id>
        <label>pygo</label>
    </interactant>
    <organismsDiffer>true</organismsDiffer>
    <experiments>3</experiments>
</comment>
<comment type="subcellular location">
    <subcellularLocation>
        <location evidence="1">Nucleus</location>
    </subcellularLocation>
</comment>
<comment type="tissue specificity">
    <text>Detected at low levels in thymus, prostate, testis, ovary and small intestine, and at lower levels in spleen, colon and blood.</text>
</comment>
<comment type="disease">
    <text evidence="7">A chromosomal aberration involving BCL9 is found in a patient with precursor B-cell acute lymphoblastic leukemia (ALL). Translocation t(1;14)(q21;q32). This translocation leaves the coding region intact, but may have pathogenic effects due to alterations in the expression level of BCL9. Several cases of translocations within the 3'-UTR of BCL9 have been found in B-cell malignancies.</text>
</comment>
<comment type="similarity">
    <text evidence="8">Belongs to the BCL9 family.</text>
</comment>
<comment type="caution">
    <text evidence="8">It is uncertain whether Met-1 or Met-27 is the initiator.</text>
</comment>
<comment type="sequence caution" evidence="8">
    <conflict type="frameshift">
        <sequence resource="EMBL-CDS" id="CAA73942"/>
    </conflict>
</comment>
<comment type="online information" name="Atlas of Genetics and Cytogenetics in Oncology and Haematology">
    <link uri="https://atlasgeneticsoncology.org/gene/466/BCL9"/>
</comment>
<reference key="1">
    <citation type="journal article" date="1998" name="Blood">
        <title>Molecular cloning of translocation t(1;14)(q21;q32) defines a novel gene (BCL9) at chromosome 1q21.</title>
        <authorList>
            <person name="Willis T.G."/>
            <person name="Zalcberg I.R."/>
            <person name="Coignet L.J.A."/>
            <person name="Wlodarska I."/>
            <person name="Stul M."/>
            <person name="Jadayel D.M."/>
            <person name="Bastard C."/>
            <person name="Treleaven J.G."/>
            <person name="Catovsky D."/>
            <person name="Silva M.L.M."/>
            <person name="Dyer M.J.S."/>
        </authorList>
    </citation>
    <scope>NUCLEOTIDE SEQUENCE [MRNA]</scope>
    <scope>CHROMOSOMAL TRANSLOCATION</scope>
    <source>
        <tissue>Fetal brain</tissue>
    </source>
</reference>
<reference key="2">
    <citation type="journal article" date="2006" name="Nature">
        <title>The DNA sequence and biological annotation of human chromosome 1.</title>
        <authorList>
            <person name="Gregory S.G."/>
            <person name="Barlow K.F."/>
            <person name="McLay K.E."/>
            <person name="Kaul R."/>
            <person name="Swarbreck D."/>
            <person name="Dunham A."/>
            <person name="Scott C.E."/>
            <person name="Howe K.L."/>
            <person name="Woodfine K."/>
            <person name="Spencer C.C.A."/>
            <person name="Jones M.C."/>
            <person name="Gillson C."/>
            <person name="Searle S."/>
            <person name="Zhou Y."/>
            <person name="Kokocinski F."/>
            <person name="McDonald L."/>
            <person name="Evans R."/>
            <person name="Phillips K."/>
            <person name="Atkinson A."/>
            <person name="Cooper R."/>
            <person name="Jones C."/>
            <person name="Hall R.E."/>
            <person name="Andrews T.D."/>
            <person name="Lloyd C."/>
            <person name="Ainscough R."/>
            <person name="Almeida J.P."/>
            <person name="Ambrose K.D."/>
            <person name="Anderson F."/>
            <person name="Andrew R.W."/>
            <person name="Ashwell R.I.S."/>
            <person name="Aubin K."/>
            <person name="Babbage A.K."/>
            <person name="Bagguley C.L."/>
            <person name="Bailey J."/>
            <person name="Beasley H."/>
            <person name="Bethel G."/>
            <person name="Bird C.P."/>
            <person name="Bray-Allen S."/>
            <person name="Brown J.Y."/>
            <person name="Brown A.J."/>
            <person name="Buckley D."/>
            <person name="Burton J."/>
            <person name="Bye J."/>
            <person name="Carder C."/>
            <person name="Chapman J.C."/>
            <person name="Clark S.Y."/>
            <person name="Clarke G."/>
            <person name="Clee C."/>
            <person name="Cobley V."/>
            <person name="Collier R.E."/>
            <person name="Corby N."/>
            <person name="Coville G.J."/>
            <person name="Davies J."/>
            <person name="Deadman R."/>
            <person name="Dunn M."/>
            <person name="Earthrowl M."/>
            <person name="Ellington A.G."/>
            <person name="Errington H."/>
            <person name="Frankish A."/>
            <person name="Frankland J."/>
            <person name="French L."/>
            <person name="Garner P."/>
            <person name="Garnett J."/>
            <person name="Gay L."/>
            <person name="Ghori M.R.J."/>
            <person name="Gibson R."/>
            <person name="Gilby L.M."/>
            <person name="Gillett W."/>
            <person name="Glithero R.J."/>
            <person name="Grafham D.V."/>
            <person name="Griffiths C."/>
            <person name="Griffiths-Jones S."/>
            <person name="Grocock R."/>
            <person name="Hammond S."/>
            <person name="Harrison E.S.I."/>
            <person name="Hart E."/>
            <person name="Haugen E."/>
            <person name="Heath P.D."/>
            <person name="Holmes S."/>
            <person name="Holt K."/>
            <person name="Howden P.J."/>
            <person name="Hunt A.R."/>
            <person name="Hunt S.E."/>
            <person name="Hunter G."/>
            <person name="Isherwood J."/>
            <person name="James R."/>
            <person name="Johnson C."/>
            <person name="Johnson D."/>
            <person name="Joy A."/>
            <person name="Kay M."/>
            <person name="Kershaw J.K."/>
            <person name="Kibukawa M."/>
            <person name="Kimberley A.M."/>
            <person name="King A."/>
            <person name="Knights A.J."/>
            <person name="Lad H."/>
            <person name="Laird G."/>
            <person name="Lawlor S."/>
            <person name="Leongamornlert D.A."/>
            <person name="Lloyd D.M."/>
            <person name="Loveland J."/>
            <person name="Lovell J."/>
            <person name="Lush M.J."/>
            <person name="Lyne R."/>
            <person name="Martin S."/>
            <person name="Mashreghi-Mohammadi M."/>
            <person name="Matthews L."/>
            <person name="Matthews N.S.W."/>
            <person name="McLaren S."/>
            <person name="Milne S."/>
            <person name="Mistry S."/>
            <person name="Moore M.J.F."/>
            <person name="Nickerson T."/>
            <person name="O'Dell C.N."/>
            <person name="Oliver K."/>
            <person name="Palmeiri A."/>
            <person name="Palmer S.A."/>
            <person name="Parker A."/>
            <person name="Patel D."/>
            <person name="Pearce A.V."/>
            <person name="Peck A.I."/>
            <person name="Pelan S."/>
            <person name="Phelps K."/>
            <person name="Phillimore B.J."/>
            <person name="Plumb R."/>
            <person name="Rajan J."/>
            <person name="Raymond C."/>
            <person name="Rouse G."/>
            <person name="Saenphimmachak C."/>
            <person name="Sehra H.K."/>
            <person name="Sheridan E."/>
            <person name="Shownkeen R."/>
            <person name="Sims S."/>
            <person name="Skuce C.D."/>
            <person name="Smith M."/>
            <person name="Steward C."/>
            <person name="Subramanian S."/>
            <person name="Sycamore N."/>
            <person name="Tracey A."/>
            <person name="Tromans A."/>
            <person name="Van Helmond Z."/>
            <person name="Wall M."/>
            <person name="Wallis J.M."/>
            <person name="White S."/>
            <person name="Whitehead S.L."/>
            <person name="Wilkinson J.E."/>
            <person name="Willey D.L."/>
            <person name="Williams H."/>
            <person name="Wilming L."/>
            <person name="Wray P.W."/>
            <person name="Wu Z."/>
            <person name="Coulson A."/>
            <person name="Vaudin M."/>
            <person name="Sulston J.E."/>
            <person name="Durbin R.M."/>
            <person name="Hubbard T."/>
            <person name="Wooster R."/>
            <person name="Dunham I."/>
            <person name="Carter N.P."/>
            <person name="McVean G."/>
            <person name="Ross M.T."/>
            <person name="Harrow J."/>
            <person name="Olson M.V."/>
            <person name="Beck S."/>
            <person name="Rogers J."/>
            <person name="Bentley D.R."/>
        </authorList>
    </citation>
    <scope>NUCLEOTIDE SEQUENCE [LARGE SCALE GENOMIC DNA]</scope>
</reference>
<reference key="3">
    <citation type="submission" date="2005-07" db="EMBL/GenBank/DDBJ databases">
        <authorList>
            <person name="Mural R.J."/>
            <person name="Istrail S."/>
            <person name="Sutton G.G."/>
            <person name="Florea L."/>
            <person name="Halpern A.L."/>
            <person name="Mobarry C.M."/>
            <person name="Lippert R."/>
            <person name="Walenz B."/>
            <person name="Shatkay H."/>
            <person name="Dew I."/>
            <person name="Miller J.R."/>
            <person name="Flanigan M.J."/>
            <person name="Edwards N.J."/>
            <person name="Bolanos R."/>
            <person name="Fasulo D."/>
            <person name="Halldorsson B.V."/>
            <person name="Hannenhalli S."/>
            <person name="Turner R."/>
            <person name="Yooseph S."/>
            <person name="Lu F."/>
            <person name="Nusskern D.R."/>
            <person name="Shue B.C."/>
            <person name="Zheng X.H."/>
            <person name="Zhong F."/>
            <person name="Delcher A.L."/>
            <person name="Huson D.H."/>
            <person name="Kravitz S.A."/>
            <person name="Mouchard L."/>
            <person name="Reinert K."/>
            <person name="Remington K.A."/>
            <person name="Clark A.G."/>
            <person name="Waterman M.S."/>
            <person name="Eichler E.E."/>
            <person name="Adams M.D."/>
            <person name="Hunkapiller M.W."/>
            <person name="Myers E.W."/>
            <person name="Venter J.C."/>
        </authorList>
    </citation>
    <scope>NUCLEOTIDE SEQUENCE [LARGE SCALE GENOMIC DNA]</scope>
</reference>
<reference key="4">
    <citation type="journal article" date="2002" name="Cell">
        <title>Wnt/wingless signaling requires BCL9/legless-mediated recruitment of pygopus to the nuclear beta-catenin-TCF complex.</title>
        <authorList>
            <person name="Kramps T."/>
            <person name="Peter O."/>
            <person name="Brunner E."/>
            <person name="Nellen D."/>
            <person name="Froesch B."/>
            <person name="Chatterjee S."/>
            <person name="Murone M."/>
            <person name="Zuellig S."/>
            <person name="Basler K."/>
        </authorList>
    </citation>
    <scope>FUNCTION</scope>
</reference>
<reference key="5">
    <citation type="journal article" date="2007" name="Science">
        <title>ATM and ATR substrate analysis reveals extensive protein networks responsive to DNA damage.</title>
        <authorList>
            <person name="Matsuoka S."/>
            <person name="Ballif B.A."/>
            <person name="Smogorzewska A."/>
            <person name="McDonald E.R. III"/>
            <person name="Hurov K.E."/>
            <person name="Luo J."/>
            <person name="Bakalarski C.E."/>
            <person name="Zhao Z."/>
            <person name="Solimini N."/>
            <person name="Lerenthal Y."/>
            <person name="Shiloh Y."/>
            <person name="Gygi S.P."/>
            <person name="Elledge S.J."/>
        </authorList>
    </citation>
    <scope>PHOSPHORYLATION [LARGE SCALE ANALYSIS] AT SER-318</scope>
    <scope>IDENTIFICATION BY MASS SPECTROMETRY [LARGE SCALE ANALYSIS]</scope>
    <source>
        <tissue>Embryonic kidney</tissue>
    </source>
</reference>
<reference key="6">
    <citation type="journal article" date="2008" name="Proc. Natl. Acad. Sci. U.S.A.">
        <title>A quantitative atlas of mitotic phosphorylation.</title>
        <authorList>
            <person name="Dephoure N."/>
            <person name="Zhou C."/>
            <person name="Villen J."/>
            <person name="Beausoleil S.A."/>
            <person name="Bakalarski C.E."/>
            <person name="Elledge S.J."/>
            <person name="Gygi S.P."/>
        </authorList>
    </citation>
    <scope>PHOSPHORYLATION [LARGE SCALE ANALYSIS] AT THR-172</scope>
    <scope>IDENTIFICATION BY MASS SPECTROMETRY [LARGE SCALE ANALYSIS]</scope>
    <source>
        <tissue>Cervix carcinoma</tissue>
    </source>
</reference>
<reference key="7">
    <citation type="journal article" date="2009" name="Anal. Chem.">
        <title>Lys-N and trypsin cover complementary parts of the phosphoproteome in a refined SCX-based approach.</title>
        <authorList>
            <person name="Gauci S."/>
            <person name="Helbig A.O."/>
            <person name="Slijper M."/>
            <person name="Krijgsveld J."/>
            <person name="Heck A.J."/>
            <person name="Mohammed S."/>
        </authorList>
    </citation>
    <scope>IDENTIFICATION BY MASS SPECTROMETRY [LARGE SCALE ANALYSIS]</scope>
</reference>
<reference key="8">
    <citation type="journal article" date="2009" name="Sci. Signal.">
        <title>Quantitative phosphoproteomic analysis of T cell receptor signaling reveals system-wide modulation of protein-protein interactions.</title>
        <authorList>
            <person name="Mayya V."/>
            <person name="Lundgren D.H."/>
            <person name="Hwang S.-I."/>
            <person name="Rezaul K."/>
            <person name="Wu L."/>
            <person name="Eng J.K."/>
            <person name="Rodionov V."/>
            <person name="Han D.K."/>
        </authorList>
    </citation>
    <scope>PHOSPHORYLATION [LARGE SCALE ANALYSIS] AT THR-315</scope>
    <scope>IDENTIFICATION BY MASS SPECTROMETRY [LARGE SCALE ANALYSIS]</scope>
    <source>
        <tissue>Leukemic T-cell</tissue>
    </source>
</reference>
<reference key="9">
    <citation type="journal article" date="2010" name="Sci. Signal.">
        <title>Quantitative phosphoproteomics reveals widespread full phosphorylation site occupancy during mitosis.</title>
        <authorList>
            <person name="Olsen J.V."/>
            <person name="Vermeulen M."/>
            <person name="Santamaria A."/>
            <person name="Kumar C."/>
            <person name="Miller M.L."/>
            <person name="Jensen L.J."/>
            <person name="Gnad F."/>
            <person name="Cox J."/>
            <person name="Jensen T.S."/>
            <person name="Nigg E.A."/>
            <person name="Brunak S."/>
            <person name="Mann M."/>
        </authorList>
    </citation>
    <scope>IDENTIFICATION BY MASS SPECTROMETRY [LARGE SCALE ANALYSIS]</scope>
    <source>
        <tissue>Cervix carcinoma</tissue>
    </source>
</reference>
<reference key="10">
    <citation type="journal article" date="2011" name="Sci. Signal.">
        <title>System-wide temporal characterization of the proteome and phosphoproteome of human embryonic stem cell differentiation.</title>
        <authorList>
            <person name="Rigbolt K.T."/>
            <person name="Prokhorova T.A."/>
            <person name="Akimov V."/>
            <person name="Henningsen J."/>
            <person name="Johansen P.T."/>
            <person name="Kratchmarova I."/>
            <person name="Kassem M."/>
            <person name="Mann M."/>
            <person name="Olsen J.V."/>
            <person name="Blagoev B."/>
        </authorList>
    </citation>
    <scope>PHOSPHORYLATION [LARGE SCALE ANALYSIS] AT SER-907 AND SER-917</scope>
    <scope>IDENTIFICATION BY MASS SPECTROMETRY [LARGE SCALE ANALYSIS]</scope>
</reference>
<reference key="11">
    <citation type="journal article" date="2013" name="J. Proteome Res.">
        <title>Toward a comprehensive characterization of a human cancer cell phosphoproteome.</title>
        <authorList>
            <person name="Zhou H."/>
            <person name="Di Palma S."/>
            <person name="Preisinger C."/>
            <person name="Peng M."/>
            <person name="Polat A.N."/>
            <person name="Heck A.J."/>
            <person name="Mohammed S."/>
        </authorList>
    </citation>
    <scope>PHOSPHORYLATION [LARGE SCALE ANALYSIS] AT SER-104; SER-157; THR-315; SER-687; SER-689 AND SER-917</scope>
    <scope>IDENTIFICATION BY MASS SPECTROMETRY [LARGE SCALE ANALYSIS]</scope>
    <source>
        <tissue>Cervix carcinoma</tissue>
        <tissue>Erythroleukemia</tissue>
    </source>
</reference>
<reference key="12">
    <citation type="journal article" date="2014" name="J. Proteomics">
        <title>An enzyme assisted RP-RPLC approach for in-depth analysis of human liver phosphoproteome.</title>
        <authorList>
            <person name="Bian Y."/>
            <person name="Song C."/>
            <person name="Cheng K."/>
            <person name="Dong M."/>
            <person name="Wang F."/>
            <person name="Huang J."/>
            <person name="Sun D."/>
            <person name="Wang L."/>
            <person name="Ye M."/>
            <person name="Zou H."/>
        </authorList>
    </citation>
    <scope>PHOSPHORYLATION [LARGE SCALE ANALYSIS] AT THR-315</scope>
    <scope>IDENTIFICATION BY MASS SPECTROMETRY [LARGE SCALE ANALYSIS]</scope>
    <source>
        <tissue>Liver</tissue>
    </source>
</reference>
<reference key="13">
    <citation type="journal article" date="2006" name="Mol. Cell">
        <title>Crystal structure of a beta-catenin/BCL9/Tcf4 complex.</title>
        <authorList>
            <person name="Sampietro J."/>
            <person name="Dahlberg C.L."/>
            <person name="Cho U.S."/>
            <person name="Hinds T.R."/>
            <person name="Kimelman D."/>
            <person name="Xu W."/>
        </authorList>
    </citation>
    <scope>X-RAY CRYSTALLOGRAPHY (2.60 ANGSTROMS) OF 347-392 IN COMPLEX WITH CTNNB1 AND TCF7L2</scope>
    <scope>INTERACTION WITH CTNNB1</scope>
    <scope>MUTAGENESIS OF HIS-358; ARG-359; LEU-366 AND ILE-369</scope>
</reference>
<reference key="14">
    <citation type="journal article" date="2008" name="Mol. Cell">
        <title>Decoding of methylated histone H3 tail by the Pygo-BCL9 Wnt signaling complex.</title>
        <authorList>
            <person name="Fiedler M."/>
            <person name="Sanchez-Barrena M.J."/>
            <person name="Nekrasov M."/>
            <person name="Mieszczanek J."/>
            <person name="Rybin V."/>
            <person name="Muller J."/>
            <person name="Evans P."/>
            <person name="Bienz M."/>
        </authorList>
    </citation>
    <scope>X-RAY CRYSTALLOGRAPHY (1.59 ANGSTROMS) OF 174-205 IN COMPLEX WITH PYGO1 AND HISTONE H3K4ME2</scope>
</reference>
<gene>
    <name type="primary">BCL9</name>
</gene>
<organism>
    <name type="scientific">Homo sapiens</name>
    <name type="common">Human</name>
    <dbReference type="NCBI Taxonomy" id="9606"/>
    <lineage>
        <taxon>Eukaryota</taxon>
        <taxon>Metazoa</taxon>
        <taxon>Chordata</taxon>
        <taxon>Craniata</taxon>
        <taxon>Vertebrata</taxon>
        <taxon>Euteleostomi</taxon>
        <taxon>Mammalia</taxon>
        <taxon>Eutheria</taxon>
        <taxon>Euarchontoglires</taxon>
        <taxon>Primates</taxon>
        <taxon>Haplorrhini</taxon>
        <taxon>Catarrhini</taxon>
        <taxon>Hominidae</taxon>
        <taxon>Homo</taxon>
    </lineage>
</organism>